<feature type="chain" id="PRO_0000155195" description="Bdellastasin">
    <location>
        <begin position="1"/>
        <end position="59"/>
    </location>
</feature>
<feature type="domain" description="Antistasin-like" evidence="2">
    <location>
        <begin position="28"/>
        <end position="54"/>
    </location>
</feature>
<feature type="site" description="Reactive bond" evidence="1">
    <location>
        <begin position="34"/>
        <end position="35"/>
    </location>
</feature>
<feature type="disulfide bond">
    <location>
        <begin position="10"/>
        <end position="21"/>
    </location>
</feature>
<feature type="disulfide bond">
    <location>
        <begin position="15"/>
        <end position="26"/>
    </location>
</feature>
<feature type="disulfide bond">
    <location>
        <begin position="28"/>
        <end position="48"/>
    </location>
</feature>
<feature type="disulfide bond">
    <location>
        <begin position="33"/>
        <end position="52"/>
    </location>
</feature>
<feature type="disulfide bond">
    <location>
        <begin position="37"/>
        <end position="54"/>
    </location>
</feature>
<feature type="strand" evidence="6">
    <location>
        <begin position="8"/>
        <end position="10"/>
    </location>
</feature>
<feature type="strand" evidence="6">
    <location>
        <begin position="13"/>
        <end position="15"/>
    </location>
</feature>
<feature type="strand" evidence="6">
    <location>
        <begin position="20"/>
        <end position="22"/>
    </location>
</feature>
<feature type="strand" evidence="6">
    <location>
        <begin position="25"/>
        <end position="27"/>
    </location>
</feature>
<feature type="strand" evidence="6">
    <location>
        <begin position="31"/>
        <end position="34"/>
    </location>
</feature>
<feature type="strand" evidence="5">
    <location>
        <begin position="41"/>
        <end position="43"/>
    </location>
</feature>
<feature type="strand" evidence="5">
    <location>
        <begin position="49"/>
        <end position="54"/>
    </location>
</feature>
<evidence type="ECO:0000250" key="1"/>
<evidence type="ECO:0000255" key="2">
    <source>
        <dbReference type="PROSITE-ProRule" id="PRU00582"/>
    </source>
</evidence>
<evidence type="ECO:0000269" key="3">
    <source>
    </source>
</evidence>
<evidence type="ECO:0000305" key="4"/>
<evidence type="ECO:0007829" key="5">
    <source>
        <dbReference type="PDB" id="1C9P"/>
    </source>
</evidence>
<evidence type="ECO:0007829" key="6">
    <source>
        <dbReference type="PDB" id="1EJA"/>
    </source>
</evidence>
<accession>P82107</accession>
<comment type="function">
    <text>Strong inhibitor of mammalian trypsin, plasmin and acrosin.</text>
</comment>
<comment type="subcellular location">
    <subcellularLocation>
        <location>Secreted</location>
    </subcellularLocation>
</comment>
<comment type="mass spectrometry"/>
<comment type="similarity">
    <text evidence="4">Belongs to the protease inhibitor I15 (antistasin) family.</text>
</comment>
<name>BDEL_HIRME</name>
<sequence>FDVNSHTTPCGPVTCSGAQMCEVDKCVCSDLHCKVKCEHGFKKDDNGCEYACICADAPQ</sequence>
<protein>
    <recommendedName>
        <fullName>Bdellastasin</fullName>
    </recommendedName>
    <alternativeName>
        <fullName>Bdellin A</fullName>
    </alternativeName>
</protein>
<proteinExistence type="evidence at protein level"/>
<reference key="1">
    <citation type="journal article" date="1998" name="Eur. J. Biochem.">
        <title>Bdellastasin, a serine protease inhibitor of the antistasin family from the medical leech (Hirudo medicinalis). Primary structure, expression in yeast, and characterization of native and recombinant inhibitor.</title>
        <authorList>
            <person name="Moser M."/>
            <person name="Auerswald E."/>
            <person name="Mentele R."/>
            <person name="Eckerskorn C."/>
            <person name="Fritz H."/>
            <person name="Fink E."/>
        </authorList>
    </citation>
    <scope>PROTEIN SEQUENCE</scope>
    <scope>MASS SPECTROMETRY</scope>
</reference>
<reference key="2">
    <citation type="journal article" date="2000" name="Acta Crystallogr. D">
        <title>L-isoaspartate 115 of porcine beta-trypsin promotes crystallization of its complex with bdellastasin.</title>
        <authorList>
            <person name="Rester U."/>
            <person name="Moser M."/>
            <person name="Huber R."/>
            <person name="Bode W."/>
        </authorList>
    </citation>
    <scope>X-RAY CRYSTALLOGRAPHY (2.7 ANGSTROMS) OF 7-59 OF COMPLEX WITH PIG TRYPSIN</scope>
</reference>
<keyword id="KW-0002">3D-structure</keyword>
<keyword id="KW-0903">Direct protein sequencing</keyword>
<keyword id="KW-1015">Disulfide bond</keyword>
<keyword id="KW-0646">Protease inhibitor</keyword>
<keyword id="KW-0964">Secreted</keyword>
<keyword id="KW-0722">Serine protease inhibitor</keyword>
<dbReference type="PDB" id="1C9P">
    <property type="method" value="X-ray"/>
    <property type="resolution" value="2.80 A"/>
    <property type="chains" value="B=1-59"/>
</dbReference>
<dbReference type="PDB" id="1C9T">
    <property type="method" value="X-ray"/>
    <property type="resolution" value="3.30 A"/>
    <property type="chains" value="G/H/I/J/K/L=1-59"/>
</dbReference>
<dbReference type="PDB" id="1EJA">
    <property type="method" value="X-ray"/>
    <property type="resolution" value="2.70 A"/>
    <property type="chains" value="B=1-59"/>
</dbReference>
<dbReference type="PDBsum" id="1C9P"/>
<dbReference type="PDBsum" id="1C9T"/>
<dbReference type="PDBsum" id="1EJA"/>
<dbReference type="SMR" id="P82107"/>
<dbReference type="EvolutionaryTrace" id="P82107"/>
<dbReference type="GO" id="GO:0005576">
    <property type="term" value="C:extracellular region"/>
    <property type="evidence" value="ECO:0007669"/>
    <property type="project" value="UniProtKB-SubCell"/>
</dbReference>
<dbReference type="GO" id="GO:0004867">
    <property type="term" value="F:serine-type endopeptidase inhibitor activity"/>
    <property type="evidence" value="ECO:0007669"/>
    <property type="project" value="UniProtKB-KW"/>
</dbReference>
<dbReference type="Gene3D" id="2.10.22.10">
    <property type="entry name" value="Antistasin, domain 1"/>
    <property type="match status" value="1"/>
</dbReference>
<dbReference type="InterPro" id="IPR004094">
    <property type="entry name" value="Antistasin-like"/>
</dbReference>
<dbReference type="InterPro" id="IPR011061">
    <property type="entry name" value="Hirudin/antistatin"/>
</dbReference>
<dbReference type="Pfam" id="PF02822">
    <property type="entry name" value="Antistasin"/>
    <property type="match status" value="1"/>
</dbReference>
<dbReference type="SUPFAM" id="SSF57262">
    <property type="entry name" value="Leech antihemostatic proteins"/>
    <property type="match status" value="1"/>
</dbReference>
<dbReference type="PROSITE" id="PS51252">
    <property type="entry name" value="ANTISTASIN"/>
    <property type="match status" value="1"/>
</dbReference>
<organism>
    <name type="scientific">Hirudo medicinalis</name>
    <name type="common">Medicinal leech</name>
    <dbReference type="NCBI Taxonomy" id="6421"/>
    <lineage>
        <taxon>Eukaryota</taxon>
        <taxon>Metazoa</taxon>
        <taxon>Spiralia</taxon>
        <taxon>Lophotrochozoa</taxon>
        <taxon>Annelida</taxon>
        <taxon>Clitellata</taxon>
        <taxon>Hirudinea</taxon>
        <taxon>Hirudinida</taxon>
        <taxon>Hirudiniformes</taxon>
        <taxon>Hirudinidae</taxon>
        <taxon>Hirudo</taxon>
    </lineage>
</organism>